<feature type="signal peptide" evidence="1">
    <location>
        <begin position="1"/>
        <end position="15"/>
    </location>
</feature>
<feature type="chain" id="PRO_0000065476" description="Neuropeptide-like protein 68">
    <location>
        <begin position="16"/>
        <end position="145"/>
    </location>
</feature>
<feature type="region of interest" description="Disordered" evidence="2">
    <location>
        <begin position="41"/>
        <end position="65"/>
    </location>
</feature>
<dbReference type="EMBL" id="BX284603">
    <property type="protein sequence ID" value="CAA90316.2"/>
    <property type="molecule type" value="Genomic_DNA"/>
</dbReference>
<dbReference type="EMBL" id="AF303261">
    <property type="protein sequence ID" value="AAG50219.1"/>
    <property type="molecule type" value="mRNA"/>
</dbReference>
<dbReference type="PIR" id="T25066">
    <property type="entry name" value="T25066"/>
</dbReference>
<dbReference type="RefSeq" id="NP_499325.1">
    <property type="nucleotide sequence ID" value="NM_066924.5"/>
</dbReference>
<dbReference type="SMR" id="Q22634"/>
<dbReference type="FunCoup" id="Q22634">
    <property type="interactions" value="1260"/>
</dbReference>
<dbReference type="PaxDb" id="6239-T21C12.3"/>
<dbReference type="EnsemblMetazoa" id="T21C12.3.1">
    <property type="protein sequence ID" value="T21C12.3.1"/>
    <property type="gene ID" value="WBGene00011899"/>
</dbReference>
<dbReference type="GeneID" id="176474"/>
<dbReference type="KEGG" id="cel:CELE_T21C12.3"/>
<dbReference type="UCSC" id="T21C12.3">
    <property type="organism name" value="c. elegans"/>
</dbReference>
<dbReference type="AGR" id="WB:WBGene00011899"/>
<dbReference type="CTD" id="176474"/>
<dbReference type="WormBase" id="T21C12.3">
    <property type="protein sequence ID" value="CE26725"/>
    <property type="gene ID" value="WBGene00011899"/>
    <property type="gene designation" value="nlp-68"/>
</dbReference>
<dbReference type="eggNOG" id="ENOG502TIYF">
    <property type="taxonomic scope" value="Eukaryota"/>
</dbReference>
<dbReference type="HOGENOM" id="CLU_149556_0_0_1"/>
<dbReference type="InParanoid" id="Q22634"/>
<dbReference type="OMA" id="VDPMSIP"/>
<dbReference type="OrthoDB" id="5853322at2759"/>
<dbReference type="PRO" id="PR:Q22634"/>
<dbReference type="Proteomes" id="UP000001940">
    <property type="component" value="Chromosome III"/>
</dbReference>
<dbReference type="Bgee" id="WBGene00011899">
    <property type="expression patterns" value="Expressed in pharyngeal muscle cell (C elegans) and 3 other cell types or tissues"/>
</dbReference>
<dbReference type="GO" id="GO:0005576">
    <property type="term" value="C:extracellular region"/>
    <property type="evidence" value="ECO:0007669"/>
    <property type="project" value="UniProtKB-SubCell"/>
</dbReference>
<comment type="subcellular location">
    <subcellularLocation>
        <location evidence="3">Secreted</location>
    </subcellularLocation>
</comment>
<sequence length="145" mass="16797">MLLVLLFSLFSVGFGMRVMRRELLKDQPTVLLLGPLEVLTSSSSEDDTPDFPSLRDKRGVDPMSIPRLIKEPPLKKRSGDFKRGDVVYPSAAKQTVPLVRVREPPLKRGQMFLEELLQFNDDAHRQFMDPLRRIRYGPNRLIYTW</sequence>
<proteinExistence type="evidence at transcript level"/>
<organism>
    <name type="scientific">Caenorhabditis elegans</name>
    <dbReference type="NCBI Taxonomy" id="6239"/>
    <lineage>
        <taxon>Eukaryota</taxon>
        <taxon>Metazoa</taxon>
        <taxon>Ecdysozoa</taxon>
        <taxon>Nematoda</taxon>
        <taxon>Chromadorea</taxon>
        <taxon>Rhabditida</taxon>
        <taxon>Rhabditina</taxon>
        <taxon>Rhabditomorpha</taxon>
        <taxon>Rhabditoidea</taxon>
        <taxon>Rhabditidae</taxon>
        <taxon>Peloderinae</taxon>
        <taxon>Caenorhabditis</taxon>
    </lineage>
</organism>
<accession>Q22634</accession>
<keyword id="KW-1185">Reference proteome</keyword>
<keyword id="KW-0964">Secreted</keyword>
<keyword id="KW-0732">Signal</keyword>
<name>NLP68_CAEEL</name>
<gene>
    <name evidence="4" type="primary">nlp-68</name>
    <name evidence="4" type="ORF">T21C12.3</name>
</gene>
<evidence type="ECO:0000255" key="1"/>
<evidence type="ECO:0000256" key="2">
    <source>
        <dbReference type="SAM" id="MobiDB-lite"/>
    </source>
</evidence>
<evidence type="ECO:0000305" key="3"/>
<evidence type="ECO:0000312" key="4">
    <source>
        <dbReference type="WormBase" id="T21C12.3"/>
    </source>
</evidence>
<reference key="1">
    <citation type="journal article" date="1998" name="Science">
        <title>Genome sequence of the nematode C. elegans: a platform for investigating biology.</title>
        <authorList>
            <consortium name="The C. elegans sequencing consortium"/>
        </authorList>
    </citation>
    <scope>NUCLEOTIDE SEQUENCE [LARGE SCALE GENOMIC DNA]</scope>
    <source>
        <strain>Bristol N2</strain>
    </source>
</reference>
<reference key="2">
    <citation type="submission" date="2000-08" db="EMBL/GenBank/DDBJ databases">
        <title>The Caenorhabditis elegans transcriptome project, a complementary view of the genome.</title>
        <authorList>
            <person name="Kohara Y."/>
            <person name="Shin-i T."/>
            <person name="Suzuki Y."/>
            <person name="Sugano S."/>
            <person name="Potdevin M."/>
            <person name="Thierry-Mieg Y."/>
            <person name="Thierry-Mieg D."/>
            <person name="Thierry-Mieg J."/>
        </authorList>
    </citation>
    <scope>NUCLEOTIDE SEQUENCE [LARGE SCALE MRNA]</scope>
    <source>
        <strain>Bristol N2</strain>
    </source>
</reference>
<protein>
    <recommendedName>
        <fullName evidence="4">Neuropeptide-like protein 68</fullName>
    </recommendedName>
</protein>